<accession>P52087</accession>
<organism>
    <name type="scientific">Paucimonas lemoignei</name>
    <name type="common">Pseudomonas lemoignei</name>
    <dbReference type="NCBI Taxonomy" id="29443"/>
    <lineage>
        <taxon>Bacteria</taxon>
        <taxon>Pseudomonadati</taxon>
        <taxon>Pseudomonadota</taxon>
        <taxon>Betaproteobacteria</taxon>
        <taxon>Burkholderiales</taxon>
        <taxon>Burkholderiaceae</taxon>
        <taxon>Paucimonas</taxon>
    </lineage>
</organism>
<comment type="function">
    <text evidence="1">The UvrABC repair system catalyzes the recognition and processing of DNA lesions. UvrA is an ATPase and a DNA-binding protein. A damage recognition complex composed of 2 UvrA and 2 UvrB subunits scans DNA for abnormalities. When the presence of a lesion has been verified by UvrB, the UvrA molecules dissociate (By similarity).</text>
</comment>
<comment type="subunit">
    <text evidence="1">Forms a heterotetramer with UvrB during the search for lesions.</text>
</comment>
<comment type="subcellular location">
    <subcellularLocation>
        <location evidence="1">Cytoplasm</location>
    </subcellularLocation>
</comment>
<comment type="similarity">
    <text evidence="3">Belongs to the ABC transporter superfamily. UvrA family.</text>
</comment>
<dbReference type="EMBL" id="Z22595">
    <property type="protein sequence ID" value="CAA80311.1"/>
    <property type="molecule type" value="Genomic_DNA"/>
</dbReference>
<dbReference type="PIR" id="S39531">
    <property type="entry name" value="S39531"/>
</dbReference>
<dbReference type="SMR" id="P52087"/>
<dbReference type="GO" id="GO:0005737">
    <property type="term" value="C:cytoplasm"/>
    <property type="evidence" value="ECO:0007669"/>
    <property type="project" value="UniProtKB-SubCell"/>
</dbReference>
<dbReference type="GO" id="GO:0005524">
    <property type="term" value="F:ATP binding"/>
    <property type="evidence" value="ECO:0007669"/>
    <property type="project" value="UniProtKB-KW"/>
</dbReference>
<dbReference type="GO" id="GO:0016887">
    <property type="term" value="F:ATP hydrolysis activity"/>
    <property type="evidence" value="ECO:0007669"/>
    <property type="project" value="InterPro"/>
</dbReference>
<dbReference type="GO" id="GO:0003677">
    <property type="term" value="F:DNA binding"/>
    <property type="evidence" value="ECO:0007669"/>
    <property type="project" value="UniProtKB-KW"/>
</dbReference>
<dbReference type="GO" id="GO:0004518">
    <property type="term" value="F:nuclease activity"/>
    <property type="evidence" value="ECO:0007669"/>
    <property type="project" value="UniProtKB-KW"/>
</dbReference>
<dbReference type="GO" id="GO:0008270">
    <property type="term" value="F:zinc ion binding"/>
    <property type="evidence" value="ECO:0007669"/>
    <property type="project" value="UniProtKB-KW"/>
</dbReference>
<dbReference type="GO" id="GO:0006281">
    <property type="term" value="P:DNA repair"/>
    <property type="evidence" value="ECO:0007669"/>
    <property type="project" value="UniProtKB-KW"/>
</dbReference>
<dbReference type="GO" id="GO:0009432">
    <property type="term" value="P:SOS response"/>
    <property type="evidence" value="ECO:0007669"/>
    <property type="project" value="UniProtKB-KW"/>
</dbReference>
<dbReference type="Gene3D" id="1.10.8.280">
    <property type="entry name" value="ABC transporter ATPase domain-like"/>
    <property type="match status" value="1"/>
</dbReference>
<dbReference type="Gene3D" id="1.20.1580.10">
    <property type="entry name" value="ABC transporter ATPase like domain"/>
    <property type="match status" value="1"/>
</dbReference>
<dbReference type="Gene3D" id="3.40.50.300">
    <property type="entry name" value="P-loop containing nucleotide triphosphate hydrolases"/>
    <property type="match status" value="2"/>
</dbReference>
<dbReference type="InterPro" id="IPR017871">
    <property type="entry name" value="ABC_transporter-like_CS"/>
</dbReference>
<dbReference type="InterPro" id="IPR027417">
    <property type="entry name" value="P-loop_NTPase"/>
</dbReference>
<dbReference type="InterPro" id="IPR041552">
    <property type="entry name" value="UvrA_DNA-bd"/>
</dbReference>
<dbReference type="PANTHER" id="PTHR43152:SF1">
    <property type="entry name" value="UVRA PROTEIN"/>
    <property type="match status" value="1"/>
</dbReference>
<dbReference type="PANTHER" id="PTHR43152">
    <property type="entry name" value="UVRABC SYSTEM PROTEIN A"/>
    <property type="match status" value="1"/>
</dbReference>
<dbReference type="Pfam" id="PF17755">
    <property type="entry name" value="UvrA_DNA-bind"/>
    <property type="match status" value="1"/>
</dbReference>
<dbReference type="SUPFAM" id="SSF52540">
    <property type="entry name" value="P-loop containing nucleoside triphosphate hydrolases"/>
    <property type="match status" value="2"/>
</dbReference>
<dbReference type="PROSITE" id="PS00211">
    <property type="entry name" value="ABC_TRANSPORTER_1"/>
    <property type="match status" value="1"/>
</dbReference>
<name>UVRA_PAULE</name>
<feature type="chain" id="PRO_0000093079" description="UvrABC system protein A">
    <location>
        <begin position="1"/>
        <end position="689" status="greater than"/>
    </location>
</feature>
<feature type="domain" description="ABC transporter">
    <location>
        <begin position="211"/>
        <end position="491"/>
    </location>
</feature>
<feature type="zinc finger region" description="C4-type">
    <location>
        <begin position="651"/>
        <end position="677"/>
    </location>
</feature>
<feature type="binding site" evidence="2">
    <location>
        <begin position="48"/>
        <end position="55"/>
    </location>
    <ligand>
        <name>ATP</name>
        <dbReference type="ChEBI" id="CHEBI:30616"/>
    </ligand>
</feature>
<feature type="binding site" evidence="2">
    <location>
        <begin position="538"/>
        <end position="545"/>
    </location>
    <ligand>
        <name>ATP</name>
        <dbReference type="ChEBI" id="CHEBI:30616"/>
    </ligand>
</feature>
<feature type="non-terminal residue">
    <location>
        <position position="689"/>
    </location>
</feature>
<proteinExistence type="inferred from homology"/>
<gene>
    <name type="primary">uvrA</name>
</gene>
<protein>
    <recommendedName>
        <fullName>UvrABC system protein A</fullName>
        <shortName>UvrA protein</shortName>
    </recommendedName>
    <alternativeName>
        <fullName>Excinuclease ABC subunit A</fullName>
    </alternativeName>
</protein>
<sequence>MRKKTDLHSHGTSEKQIEGFVQVRGAREHNLKDVHLDIPRNALVVFTGISGSGKSSLAFGTLYAEAQRRYLESVSPYARRLFHQMSVPEVDSIEGLPPAIALQQQRGAPTTRSSVGSITTLSNSLRMLYSRAGNYPKGQDILYAESFSPNTPEGACPTCHGLGRVYEVTEQSMVPDDSKTIRERAIAAWPPAWHGQNLRDILTTLGYDIDIPWRDLPKKDRKWILFTEEQPVVPVYAGFTLDEVRHALKRKETPSYQGTFTSARKYVLDTFANTESPAMKKRVSQYMVGKECTLCQGKRLRPESLAVTFAGYDITELSRLPLKHLATLLHPYAQENTPDWDKLAAKNPEKAIVTQRIAEDLSNRLSVLLSLGLGYLTLERSTPTLSPGELQRLRLATQVHSNLFGVVYVLDEPSAGLHPADTQALLAALDRLKQAGNSLFVVEHALGVIRHADWIVDVGPEAGEHGGRILYSGPPQGLSEVAESHTRRYLFPDKEADIFAKQPSRSPQGWLQVAGVTRNNLDNLTAAFPLGVLTSVSGVSGSGKSSLVSQVLVELVSKALGQELVAEAEQGESIEHDTPATLGGRITAGMESIKRLVTVDQKPIGRTPRSNLATYTGLFDHVRKLFASTRAAKARHYDAGRFSFNVAKGRCGNCEGEGFVMVELLFLPSVYAPCPVCKGTRFNAKTLEI</sequence>
<reference key="1">
    <citation type="journal article" date="1993" name="Eur. J. Biochem.">
        <title>Cloning and characterization of the poly(hydroxyalkanoic acid)-depolymerase gene locus, phaZ1, of Pseudomonas lemoignei and its gene product.</title>
        <authorList>
            <person name="Jendrossek D."/>
            <person name="Mueller B."/>
            <person name="Schlegel G."/>
        </authorList>
    </citation>
    <scope>NUCLEOTIDE SEQUENCE [GENOMIC DNA]</scope>
</reference>
<keyword id="KW-0067">ATP-binding</keyword>
<keyword id="KW-0963">Cytoplasm</keyword>
<keyword id="KW-0227">DNA damage</keyword>
<keyword id="KW-0228">DNA excision</keyword>
<keyword id="KW-0234">DNA repair</keyword>
<keyword id="KW-0238">DNA-binding</keyword>
<keyword id="KW-0267">Excision nuclease</keyword>
<keyword id="KW-0479">Metal-binding</keyword>
<keyword id="KW-0547">Nucleotide-binding</keyword>
<keyword id="KW-0677">Repeat</keyword>
<keyword id="KW-0742">SOS response</keyword>
<keyword id="KW-0862">Zinc</keyword>
<keyword id="KW-0863">Zinc-finger</keyword>
<evidence type="ECO:0000250" key="1"/>
<evidence type="ECO:0000255" key="2"/>
<evidence type="ECO:0000305" key="3"/>